<feature type="chain" id="PRO_0000235356" description="Holliday junction branch migration complex subunit RuvB">
    <location>
        <begin position="1"/>
        <end position="339"/>
    </location>
</feature>
<feature type="region of interest" description="Large ATPase domain (RuvB-L)" evidence="1">
    <location>
        <begin position="1"/>
        <end position="181"/>
    </location>
</feature>
<feature type="region of interest" description="Small ATPAse domain (RuvB-S)" evidence="1">
    <location>
        <begin position="182"/>
        <end position="252"/>
    </location>
</feature>
<feature type="region of interest" description="Head domain (RuvB-H)" evidence="1">
    <location>
        <begin position="255"/>
        <end position="339"/>
    </location>
</feature>
<feature type="binding site" evidence="1">
    <location>
        <position position="20"/>
    </location>
    <ligand>
        <name>ATP</name>
        <dbReference type="ChEBI" id="CHEBI:30616"/>
    </ligand>
</feature>
<feature type="binding site" evidence="1">
    <location>
        <position position="21"/>
    </location>
    <ligand>
        <name>ATP</name>
        <dbReference type="ChEBI" id="CHEBI:30616"/>
    </ligand>
</feature>
<feature type="binding site" evidence="1">
    <location>
        <position position="62"/>
    </location>
    <ligand>
        <name>ATP</name>
        <dbReference type="ChEBI" id="CHEBI:30616"/>
    </ligand>
</feature>
<feature type="binding site" evidence="1">
    <location>
        <position position="65"/>
    </location>
    <ligand>
        <name>ATP</name>
        <dbReference type="ChEBI" id="CHEBI:30616"/>
    </ligand>
</feature>
<feature type="binding site" evidence="1">
    <location>
        <position position="66"/>
    </location>
    <ligand>
        <name>ATP</name>
        <dbReference type="ChEBI" id="CHEBI:30616"/>
    </ligand>
</feature>
<feature type="binding site" evidence="1">
    <location>
        <position position="66"/>
    </location>
    <ligand>
        <name>Mg(2+)</name>
        <dbReference type="ChEBI" id="CHEBI:18420"/>
    </ligand>
</feature>
<feature type="binding site" evidence="1">
    <location>
        <position position="67"/>
    </location>
    <ligand>
        <name>ATP</name>
        <dbReference type="ChEBI" id="CHEBI:30616"/>
    </ligand>
</feature>
<feature type="binding site" evidence="1">
    <location>
        <begin position="128"/>
        <end position="130"/>
    </location>
    <ligand>
        <name>ATP</name>
        <dbReference type="ChEBI" id="CHEBI:30616"/>
    </ligand>
</feature>
<feature type="binding site" evidence="1">
    <location>
        <position position="171"/>
    </location>
    <ligand>
        <name>ATP</name>
        <dbReference type="ChEBI" id="CHEBI:30616"/>
    </ligand>
</feature>
<feature type="binding site" evidence="1">
    <location>
        <position position="181"/>
    </location>
    <ligand>
        <name>ATP</name>
        <dbReference type="ChEBI" id="CHEBI:30616"/>
    </ligand>
</feature>
<feature type="binding site" evidence="1">
    <location>
        <position position="218"/>
    </location>
    <ligand>
        <name>ATP</name>
        <dbReference type="ChEBI" id="CHEBI:30616"/>
    </ligand>
</feature>
<feature type="binding site" evidence="1">
    <location>
        <position position="310"/>
    </location>
    <ligand>
        <name>DNA</name>
        <dbReference type="ChEBI" id="CHEBI:16991"/>
    </ligand>
</feature>
<feature type="binding site" evidence="1">
    <location>
        <position position="315"/>
    </location>
    <ligand>
        <name>DNA</name>
        <dbReference type="ChEBI" id="CHEBI:16991"/>
    </ligand>
</feature>
<sequence length="339" mass="37726">MEERLVSGYELTEDENEFSLRPRRLSEYIGQQKVKETISIFIEAAKKRNEALDHVLLFGPPGLGKTTLATIIANELGVDIKITSGPALERPGDLAAILTNLGEKDVLFIDEIHRLPRIVEEVLYSAMEDFALDIMLGKGPGARSLRLSLPKFTLIGATTRAGLLTSPLRDRFGMVHRLEFYSVEELMLIINRSAALLKTEITPEGSFEIAKRSRGTPRIANRLLKRVRDYAEVRSSGVINLENAKAALDLLEIDELGLDPTDRLILKTMIEKYQGGPVGIEAIAAAISEEVDTIEDVYEPFLLQIGFIKRTPRGRVVTKLAYDHLGIAYNKNAGELSLW</sequence>
<organism>
    <name type="scientific">Carboxydothermus hydrogenoformans (strain ATCC BAA-161 / DSM 6008 / Z-2901)</name>
    <dbReference type="NCBI Taxonomy" id="246194"/>
    <lineage>
        <taxon>Bacteria</taxon>
        <taxon>Bacillati</taxon>
        <taxon>Bacillota</taxon>
        <taxon>Clostridia</taxon>
        <taxon>Thermoanaerobacterales</taxon>
        <taxon>Thermoanaerobacteraceae</taxon>
        <taxon>Carboxydothermus</taxon>
    </lineage>
</organism>
<accession>Q3ABY0</accession>
<dbReference type="EC" id="3.6.4.-" evidence="1"/>
<dbReference type="EMBL" id="CP000141">
    <property type="protein sequence ID" value="ABB16239.1"/>
    <property type="molecule type" value="Genomic_DNA"/>
</dbReference>
<dbReference type="RefSeq" id="WP_011344429.1">
    <property type="nucleotide sequence ID" value="NC_007503.1"/>
</dbReference>
<dbReference type="SMR" id="Q3ABY0"/>
<dbReference type="FunCoup" id="Q3ABY0">
    <property type="interactions" value="375"/>
</dbReference>
<dbReference type="STRING" id="246194.CHY_1522"/>
<dbReference type="KEGG" id="chy:CHY_1522"/>
<dbReference type="eggNOG" id="COG2255">
    <property type="taxonomic scope" value="Bacteria"/>
</dbReference>
<dbReference type="HOGENOM" id="CLU_055599_1_0_9"/>
<dbReference type="InParanoid" id="Q3ABY0"/>
<dbReference type="OrthoDB" id="9804478at2"/>
<dbReference type="Proteomes" id="UP000002706">
    <property type="component" value="Chromosome"/>
</dbReference>
<dbReference type="GO" id="GO:0005737">
    <property type="term" value="C:cytoplasm"/>
    <property type="evidence" value="ECO:0007669"/>
    <property type="project" value="UniProtKB-SubCell"/>
</dbReference>
<dbReference type="GO" id="GO:0048476">
    <property type="term" value="C:Holliday junction resolvase complex"/>
    <property type="evidence" value="ECO:0007669"/>
    <property type="project" value="UniProtKB-UniRule"/>
</dbReference>
<dbReference type="GO" id="GO:0005524">
    <property type="term" value="F:ATP binding"/>
    <property type="evidence" value="ECO:0007669"/>
    <property type="project" value="UniProtKB-UniRule"/>
</dbReference>
<dbReference type="GO" id="GO:0016887">
    <property type="term" value="F:ATP hydrolysis activity"/>
    <property type="evidence" value="ECO:0007669"/>
    <property type="project" value="InterPro"/>
</dbReference>
<dbReference type="GO" id="GO:0000400">
    <property type="term" value="F:four-way junction DNA binding"/>
    <property type="evidence" value="ECO:0007669"/>
    <property type="project" value="UniProtKB-UniRule"/>
</dbReference>
<dbReference type="GO" id="GO:0009378">
    <property type="term" value="F:four-way junction helicase activity"/>
    <property type="evidence" value="ECO:0007669"/>
    <property type="project" value="InterPro"/>
</dbReference>
<dbReference type="GO" id="GO:0006310">
    <property type="term" value="P:DNA recombination"/>
    <property type="evidence" value="ECO:0007669"/>
    <property type="project" value="UniProtKB-UniRule"/>
</dbReference>
<dbReference type="GO" id="GO:0006281">
    <property type="term" value="P:DNA repair"/>
    <property type="evidence" value="ECO:0007669"/>
    <property type="project" value="UniProtKB-UniRule"/>
</dbReference>
<dbReference type="CDD" id="cd00009">
    <property type="entry name" value="AAA"/>
    <property type="match status" value="1"/>
</dbReference>
<dbReference type="FunFam" id="3.40.50.300:FF:000073">
    <property type="entry name" value="Holliday junction ATP-dependent DNA helicase RuvB"/>
    <property type="match status" value="1"/>
</dbReference>
<dbReference type="Gene3D" id="1.10.8.60">
    <property type="match status" value="1"/>
</dbReference>
<dbReference type="Gene3D" id="3.40.50.300">
    <property type="entry name" value="P-loop containing nucleotide triphosphate hydrolases"/>
    <property type="match status" value="1"/>
</dbReference>
<dbReference type="Gene3D" id="1.10.10.10">
    <property type="entry name" value="Winged helix-like DNA-binding domain superfamily/Winged helix DNA-binding domain"/>
    <property type="match status" value="1"/>
</dbReference>
<dbReference type="HAMAP" id="MF_00016">
    <property type="entry name" value="DNA_HJ_migration_RuvB"/>
    <property type="match status" value="1"/>
</dbReference>
<dbReference type="InterPro" id="IPR003593">
    <property type="entry name" value="AAA+_ATPase"/>
</dbReference>
<dbReference type="InterPro" id="IPR041445">
    <property type="entry name" value="AAA_lid_4"/>
</dbReference>
<dbReference type="InterPro" id="IPR004605">
    <property type="entry name" value="DNA_helicase_Holl-junc_RuvB"/>
</dbReference>
<dbReference type="InterPro" id="IPR027417">
    <property type="entry name" value="P-loop_NTPase"/>
</dbReference>
<dbReference type="InterPro" id="IPR008824">
    <property type="entry name" value="RuvB-like_N"/>
</dbReference>
<dbReference type="InterPro" id="IPR008823">
    <property type="entry name" value="RuvB_C"/>
</dbReference>
<dbReference type="InterPro" id="IPR036388">
    <property type="entry name" value="WH-like_DNA-bd_sf"/>
</dbReference>
<dbReference type="InterPro" id="IPR036390">
    <property type="entry name" value="WH_DNA-bd_sf"/>
</dbReference>
<dbReference type="NCBIfam" id="NF000868">
    <property type="entry name" value="PRK00080.1"/>
    <property type="match status" value="1"/>
</dbReference>
<dbReference type="NCBIfam" id="TIGR00635">
    <property type="entry name" value="ruvB"/>
    <property type="match status" value="1"/>
</dbReference>
<dbReference type="PANTHER" id="PTHR42848">
    <property type="match status" value="1"/>
</dbReference>
<dbReference type="PANTHER" id="PTHR42848:SF1">
    <property type="entry name" value="HOLLIDAY JUNCTION BRANCH MIGRATION COMPLEX SUBUNIT RUVB"/>
    <property type="match status" value="1"/>
</dbReference>
<dbReference type="Pfam" id="PF17864">
    <property type="entry name" value="AAA_lid_4"/>
    <property type="match status" value="1"/>
</dbReference>
<dbReference type="Pfam" id="PF05491">
    <property type="entry name" value="RuvB_C"/>
    <property type="match status" value="1"/>
</dbReference>
<dbReference type="Pfam" id="PF05496">
    <property type="entry name" value="RuvB_N"/>
    <property type="match status" value="1"/>
</dbReference>
<dbReference type="SMART" id="SM00382">
    <property type="entry name" value="AAA"/>
    <property type="match status" value="1"/>
</dbReference>
<dbReference type="SUPFAM" id="SSF52540">
    <property type="entry name" value="P-loop containing nucleoside triphosphate hydrolases"/>
    <property type="match status" value="1"/>
</dbReference>
<dbReference type="SUPFAM" id="SSF46785">
    <property type="entry name" value="Winged helix' DNA-binding domain"/>
    <property type="match status" value="1"/>
</dbReference>
<gene>
    <name evidence="1" type="primary">ruvB</name>
    <name type="ordered locus">CHY_1522</name>
</gene>
<evidence type="ECO:0000255" key="1">
    <source>
        <dbReference type="HAMAP-Rule" id="MF_00016"/>
    </source>
</evidence>
<protein>
    <recommendedName>
        <fullName evidence="1">Holliday junction branch migration complex subunit RuvB</fullName>
        <ecNumber evidence="1">3.6.4.-</ecNumber>
    </recommendedName>
</protein>
<reference key="1">
    <citation type="journal article" date="2005" name="PLoS Genet.">
        <title>Life in hot carbon monoxide: the complete genome sequence of Carboxydothermus hydrogenoformans Z-2901.</title>
        <authorList>
            <person name="Wu M."/>
            <person name="Ren Q."/>
            <person name="Durkin A.S."/>
            <person name="Daugherty S.C."/>
            <person name="Brinkac L.M."/>
            <person name="Dodson R.J."/>
            <person name="Madupu R."/>
            <person name="Sullivan S.A."/>
            <person name="Kolonay J.F."/>
            <person name="Nelson W.C."/>
            <person name="Tallon L.J."/>
            <person name="Jones K.M."/>
            <person name="Ulrich L.E."/>
            <person name="Gonzalez J.M."/>
            <person name="Zhulin I.B."/>
            <person name="Robb F.T."/>
            <person name="Eisen J.A."/>
        </authorList>
    </citation>
    <scope>NUCLEOTIDE SEQUENCE [LARGE SCALE GENOMIC DNA]</scope>
    <source>
        <strain>ATCC BAA-161 / DSM 6008 / Z-2901</strain>
    </source>
</reference>
<keyword id="KW-0067">ATP-binding</keyword>
<keyword id="KW-0963">Cytoplasm</keyword>
<keyword id="KW-0227">DNA damage</keyword>
<keyword id="KW-0233">DNA recombination</keyword>
<keyword id="KW-0234">DNA repair</keyword>
<keyword id="KW-0238">DNA-binding</keyword>
<keyword id="KW-0378">Hydrolase</keyword>
<keyword id="KW-0547">Nucleotide-binding</keyword>
<keyword id="KW-1185">Reference proteome</keyword>
<comment type="function">
    <text evidence="1">The RuvA-RuvB-RuvC complex processes Holliday junction (HJ) DNA during genetic recombination and DNA repair, while the RuvA-RuvB complex plays an important role in the rescue of blocked DNA replication forks via replication fork reversal (RFR). RuvA specifically binds to HJ cruciform DNA, conferring on it an open structure. The RuvB hexamer acts as an ATP-dependent pump, pulling dsDNA into and through the RuvAB complex. RuvB forms 2 homohexamers on either side of HJ DNA bound by 1 or 2 RuvA tetramers; 4 subunits per hexamer contact DNA at a time. Coordinated motions by a converter formed by DNA-disengaged RuvB subunits stimulates ATP hydrolysis and nucleotide exchange. Immobilization of the converter enables RuvB to convert the ATP-contained energy into a lever motion, pulling 2 nucleotides of DNA out of the RuvA tetramer per ATP hydrolyzed, thus driving DNA branch migration. The RuvB motors rotate together with the DNA substrate, which together with the progressing nucleotide cycle form the mechanistic basis for DNA recombination by continuous HJ branch migration. Branch migration allows RuvC to scan DNA until it finds its consensus sequence, where it cleaves and resolves cruciform DNA.</text>
</comment>
<comment type="catalytic activity">
    <reaction evidence="1">
        <text>ATP + H2O = ADP + phosphate + H(+)</text>
        <dbReference type="Rhea" id="RHEA:13065"/>
        <dbReference type="ChEBI" id="CHEBI:15377"/>
        <dbReference type="ChEBI" id="CHEBI:15378"/>
        <dbReference type="ChEBI" id="CHEBI:30616"/>
        <dbReference type="ChEBI" id="CHEBI:43474"/>
        <dbReference type="ChEBI" id="CHEBI:456216"/>
    </reaction>
</comment>
<comment type="subunit">
    <text evidence="1">Homohexamer. Forms an RuvA(8)-RuvB(12)-Holliday junction (HJ) complex. HJ DNA is sandwiched between 2 RuvA tetramers; dsDNA enters through RuvA and exits via RuvB. An RuvB hexamer assembles on each DNA strand where it exits the tetramer. Each RuvB hexamer is contacted by two RuvA subunits (via domain III) on 2 adjacent RuvB subunits; this complex drives branch migration. In the full resolvosome a probable DNA-RuvA(4)-RuvB(12)-RuvC(2) complex forms which resolves the HJ.</text>
</comment>
<comment type="subcellular location">
    <subcellularLocation>
        <location evidence="1">Cytoplasm</location>
    </subcellularLocation>
</comment>
<comment type="domain">
    <text evidence="1">Has 3 domains, the large (RuvB-L) and small ATPase (RuvB-S) domains and the C-terminal head (RuvB-H) domain. The head domain binds DNA, while the ATPase domains jointly bind ATP, ADP or are empty depending on the state of the subunit in the translocation cycle. During a single DNA translocation step the structure of each domain remains the same, but their relative positions change.</text>
</comment>
<comment type="similarity">
    <text evidence="1">Belongs to the RuvB family.</text>
</comment>
<name>RUVB_CARHZ</name>
<proteinExistence type="inferred from homology"/>